<dbReference type="EC" id="7.1.1.-" evidence="1"/>
<dbReference type="EMBL" id="CT971583">
    <property type="protein sequence ID" value="CAK24310.1"/>
    <property type="molecule type" value="Genomic_DNA"/>
</dbReference>
<dbReference type="SMR" id="A5GMZ5"/>
<dbReference type="STRING" id="32051.SynWH7803_1884"/>
<dbReference type="KEGG" id="syx:SynWH7803_1884"/>
<dbReference type="eggNOG" id="COG1007">
    <property type="taxonomic scope" value="Bacteria"/>
</dbReference>
<dbReference type="HOGENOM" id="CLU_007100_1_2_3"/>
<dbReference type="OrthoDB" id="9811718at2"/>
<dbReference type="Proteomes" id="UP000001566">
    <property type="component" value="Chromosome"/>
</dbReference>
<dbReference type="GO" id="GO:0031676">
    <property type="term" value="C:plasma membrane-derived thylakoid membrane"/>
    <property type="evidence" value="ECO:0007669"/>
    <property type="project" value="UniProtKB-SubCell"/>
</dbReference>
<dbReference type="GO" id="GO:0008137">
    <property type="term" value="F:NADH dehydrogenase (ubiquinone) activity"/>
    <property type="evidence" value="ECO:0007669"/>
    <property type="project" value="InterPro"/>
</dbReference>
<dbReference type="GO" id="GO:0048038">
    <property type="term" value="F:quinone binding"/>
    <property type="evidence" value="ECO:0007669"/>
    <property type="project" value="UniProtKB-KW"/>
</dbReference>
<dbReference type="GO" id="GO:0042773">
    <property type="term" value="P:ATP synthesis coupled electron transport"/>
    <property type="evidence" value="ECO:0007669"/>
    <property type="project" value="InterPro"/>
</dbReference>
<dbReference type="GO" id="GO:0019684">
    <property type="term" value="P:photosynthesis, light reaction"/>
    <property type="evidence" value="ECO:0007669"/>
    <property type="project" value="UniProtKB-UniRule"/>
</dbReference>
<dbReference type="HAMAP" id="MF_00445">
    <property type="entry name" value="NDH1_NuoN_1"/>
    <property type="match status" value="1"/>
</dbReference>
<dbReference type="InterPro" id="IPR010096">
    <property type="entry name" value="NADH-Q_OxRdtase_suN/2"/>
</dbReference>
<dbReference type="InterPro" id="IPR001750">
    <property type="entry name" value="ND/Mrp_TM"/>
</dbReference>
<dbReference type="NCBIfam" id="TIGR01770">
    <property type="entry name" value="NDH_I_N"/>
    <property type="match status" value="1"/>
</dbReference>
<dbReference type="NCBIfam" id="NF002701">
    <property type="entry name" value="PRK02504.1"/>
    <property type="match status" value="1"/>
</dbReference>
<dbReference type="PANTHER" id="PTHR22773">
    <property type="entry name" value="NADH DEHYDROGENASE"/>
    <property type="match status" value="1"/>
</dbReference>
<dbReference type="Pfam" id="PF00361">
    <property type="entry name" value="Proton_antipo_M"/>
    <property type="match status" value="1"/>
</dbReference>
<proteinExistence type="inferred from homology"/>
<feature type="chain" id="PRO_1000026154" description="NAD(P)H-quinone oxidoreductase subunit 2">
    <location>
        <begin position="1"/>
        <end position="523"/>
    </location>
</feature>
<feature type="transmembrane region" description="Helical" evidence="1">
    <location>
        <begin position="29"/>
        <end position="49"/>
    </location>
</feature>
<feature type="transmembrane region" description="Helical" evidence="1">
    <location>
        <begin position="57"/>
        <end position="77"/>
    </location>
</feature>
<feature type="transmembrane region" description="Helical" evidence="1">
    <location>
        <begin position="94"/>
        <end position="114"/>
    </location>
</feature>
<feature type="transmembrane region" description="Helical" evidence="1">
    <location>
        <begin position="128"/>
        <end position="148"/>
    </location>
</feature>
<feature type="transmembrane region" description="Helical" evidence="1">
    <location>
        <begin position="182"/>
        <end position="202"/>
    </location>
</feature>
<feature type="transmembrane region" description="Helical" evidence="1">
    <location>
        <begin position="223"/>
        <end position="243"/>
    </location>
</feature>
<feature type="transmembrane region" description="Helical" evidence="1">
    <location>
        <begin position="255"/>
        <end position="275"/>
    </location>
</feature>
<feature type="transmembrane region" description="Helical" evidence="1">
    <location>
        <begin position="291"/>
        <end position="311"/>
    </location>
</feature>
<feature type="transmembrane region" description="Helical" evidence="1">
    <location>
        <begin position="317"/>
        <end position="337"/>
    </location>
</feature>
<feature type="transmembrane region" description="Helical" evidence="1">
    <location>
        <begin position="345"/>
        <end position="365"/>
    </location>
</feature>
<feature type="transmembrane region" description="Helical" evidence="1">
    <location>
        <begin position="389"/>
        <end position="409"/>
    </location>
</feature>
<feature type="transmembrane region" description="Helical" evidence="1">
    <location>
        <begin position="424"/>
        <end position="444"/>
    </location>
</feature>
<feature type="transmembrane region" description="Helical" evidence="1">
    <location>
        <begin position="477"/>
        <end position="497"/>
    </location>
</feature>
<gene>
    <name evidence="1" type="primary">ndhB</name>
    <name type="ordered locus">SynWH7803_1884</name>
</gene>
<organism>
    <name type="scientific">Synechococcus sp. (strain WH7803)</name>
    <dbReference type="NCBI Taxonomy" id="32051"/>
    <lineage>
        <taxon>Bacteria</taxon>
        <taxon>Bacillati</taxon>
        <taxon>Cyanobacteriota</taxon>
        <taxon>Cyanophyceae</taxon>
        <taxon>Synechococcales</taxon>
        <taxon>Synechococcaceae</taxon>
        <taxon>Synechococcus</taxon>
    </lineage>
</organism>
<reference key="1">
    <citation type="submission" date="2006-05" db="EMBL/GenBank/DDBJ databases">
        <authorList>
            <consortium name="Genoscope"/>
        </authorList>
    </citation>
    <scope>NUCLEOTIDE SEQUENCE [LARGE SCALE GENOMIC DNA]</scope>
    <source>
        <strain>WH7803</strain>
    </source>
</reference>
<accession>A5GMZ5</accession>
<comment type="function">
    <text evidence="1">NDH-1 shuttles electrons from an unknown electron donor, via FMN and iron-sulfur (Fe-S) centers, to quinones in the respiratory and/or the photosynthetic chain. The immediate electron acceptor for the enzyme in this species is believed to be plastoquinone. Couples the redox reaction to proton translocation, and thus conserves the redox energy in a proton gradient. Cyanobacterial NDH-1 also plays a role in inorganic carbon-concentration.</text>
</comment>
<comment type="catalytic activity">
    <reaction evidence="1">
        <text>a plastoquinone + NADH + (n+1) H(+)(in) = a plastoquinol + NAD(+) + n H(+)(out)</text>
        <dbReference type="Rhea" id="RHEA:42608"/>
        <dbReference type="Rhea" id="RHEA-COMP:9561"/>
        <dbReference type="Rhea" id="RHEA-COMP:9562"/>
        <dbReference type="ChEBI" id="CHEBI:15378"/>
        <dbReference type="ChEBI" id="CHEBI:17757"/>
        <dbReference type="ChEBI" id="CHEBI:57540"/>
        <dbReference type="ChEBI" id="CHEBI:57945"/>
        <dbReference type="ChEBI" id="CHEBI:62192"/>
    </reaction>
</comment>
<comment type="catalytic activity">
    <reaction evidence="1">
        <text>a plastoquinone + NADPH + (n+1) H(+)(in) = a plastoquinol + NADP(+) + n H(+)(out)</text>
        <dbReference type="Rhea" id="RHEA:42612"/>
        <dbReference type="Rhea" id="RHEA-COMP:9561"/>
        <dbReference type="Rhea" id="RHEA-COMP:9562"/>
        <dbReference type="ChEBI" id="CHEBI:15378"/>
        <dbReference type="ChEBI" id="CHEBI:17757"/>
        <dbReference type="ChEBI" id="CHEBI:57783"/>
        <dbReference type="ChEBI" id="CHEBI:58349"/>
        <dbReference type="ChEBI" id="CHEBI:62192"/>
    </reaction>
</comment>
<comment type="subunit">
    <text evidence="1">NDH-1 can be composed of about 15 different subunits; different subcomplexes with different compositions have been identified which probably have different functions.</text>
</comment>
<comment type="subcellular location">
    <subcellularLocation>
        <location evidence="1">Cellular thylakoid membrane</location>
        <topology evidence="1">Multi-pass membrane protein</topology>
    </subcellularLocation>
</comment>
<comment type="similarity">
    <text evidence="1">Belongs to the complex I subunit 2 family.</text>
</comment>
<keyword id="KW-0472">Membrane</keyword>
<keyword id="KW-0520">NAD</keyword>
<keyword id="KW-0521">NADP</keyword>
<keyword id="KW-0618">Plastoquinone</keyword>
<keyword id="KW-0874">Quinone</keyword>
<keyword id="KW-1185">Reference proteome</keyword>
<keyword id="KW-0793">Thylakoid</keyword>
<keyword id="KW-1278">Translocase</keyword>
<keyword id="KW-0812">Transmembrane</keyword>
<keyword id="KW-1133">Transmembrane helix</keyword>
<keyword id="KW-0813">Transport</keyword>
<name>NU2C_SYNPW</name>
<sequence>MPEMGALLLTTPALAAPGELLNLSLNASAVAPEGAVLLAMLATLLVDLAGEKVSTRWVPPICYAGLGTALLLLALQWNAPLEPSFLGAFLPDHLAIAFRAVVALSTLLSLMISWRYAEQGGTPVGEYAGILLAATLGGMLLCGATDLVSVFVSLETLSVASYLLSGYMKRDARSSEAALKYLLVGSAAAAVFLYGSSLLYGLSGSTSLEAIGQALLSSPTPLAALALVFVLATVAFKIAAVPFHQWTPDVYEGSPTPVVAFLSVGSKAAGFALALRLLVGCFGSFDTQWKLLFTVLAVLSMTLGNVVALAQTSMKRMLAYSSIGQAGFVMIGLVCGTEDGFAAMVLYTAAYLFMNLGAFACIILFSIRTGSDRIADYAGLYQKDPLITLGLSLCLLSLGGIPPMLGFFGKIYLFFAGWADHQYVLVVVGLITSVISIYYYIGVIKMMVVKEPQEASDAVKAYPPVQWSTLGLPPLRVALVTCVVVTAVGGILSNPLFQWASDAVAGTPLLQQAIASVNGSSLG</sequence>
<evidence type="ECO:0000255" key="1">
    <source>
        <dbReference type="HAMAP-Rule" id="MF_00445"/>
    </source>
</evidence>
<protein>
    <recommendedName>
        <fullName evidence="1">NAD(P)H-quinone oxidoreductase subunit 2</fullName>
        <ecNumber evidence="1">7.1.1.-</ecNumber>
    </recommendedName>
    <alternativeName>
        <fullName evidence="1">NAD(P)H dehydrogenase subunit 2</fullName>
    </alternativeName>
    <alternativeName>
        <fullName evidence="1">NADH-plastoquinone oxidoreductase subunit 2</fullName>
    </alternativeName>
    <alternativeName>
        <fullName evidence="1">NDH-1, subunit 2</fullName>
    </alternativeName>
</protein>